<comment type="function">
    <text evidence="1">Catalyzes the transfer of the diacylglyceryl group from phosphatidylglycerol to the sulfhydryl group of the N-terminal cysteine of a prolipoprotein, the first step in the formation of mature lipoproteins.</text>
</comment>
<comment type="catalytic activity">
    <reaction evidence="1">
        <text>L-cysteinyl-[prolipoprotein] + a 1,2-diacyl-sn-glycero-3-phospho-(1'-sn-glycerol) = an S-1,2-diacyl-sn-glyceryl-L-cysteinyl-[prolipoprotein] + sn-glycerol 1-phosphate + H(+)</text>
        <dbReference type="Rhea" id="RHEA:56712"/>
        <dbReference type="Rhea" id="RHEA-COMP:14679"/>
        <dbReference type="Rhea" id="RHEA-COMP:14680"/>
        <dbReference type="ChEBI" id="CHEBI:15378"/>
        <dbReference type="ChEBI" id="CHEBI:29950"/>
        <dbReference type="ChEBI" id="CHEBI:57685"/>
        <dbReference type="ChEBI" id="CHEBI:64716"/>
        <dbReference type="ChEBI" id="CHEBI:140658"/>
        <dbReference type="EC" id="2.5.1.145"/>
    </reaction>
</comment>
<comment type="pathway">
    <text evidence="1">Protein modification; lipoprotein biosynthesis (diacylglyceryl transfer).</text>
</comment>
<comment type="subcellular location">
    <subcellularLocation>
        <location evidence="1">Cell inner membrane</location>
        <topology evidence="1">Multi-pass membrane protein</topology>
    </subcellularLocation>
</comment>
<comment type="similarity">
    <text evidence="1">Belongs to the Lgt family.</text>
</comment>
<accession>Q1CSR6</accession>
<dbReference type="EC" id="2.5.1.145" evidence="1"/>
<dbReference type="EMBL" id="CP000241">
    <property type="protein sequence ID" value="ABF85006.1"/>
    <property type="molecule type" value="Genomic_DNA"/>
</dbReference>
<dbReference type="RefSeq" id="WP_000995082.1">
    <property type="nucleotide sequence ID" value="NC_008086.1"/>
</dbReference>
<dbReference type="SMR" id="Q1CSR6"/>
<dbReference type="KEGG" id="hpa:HPAG1_0939"/>
<dbReference type="HOGENOM" id="CLU_013386_1_0_7"/>
<dbReference type="UniPathway" id="UPA00664"/>
<dbReference type="GO" id="GO:0005886">
    <property type="term" value="C:plasma membrane"/>
    <property type="evidence" value="ECO:0007669"/>
    <property type="project" value="UniProtKB-SubCell"/>
</dbReference>
<dbReference type="GO" id="GO:0008961">
    <property type="term" value="F:phosphatidylglycerol-prolipoprotein diacylglyceryl transferase activity"/>
    <property type="evidence" value="ECO:0007669"/>
    <property type="project" value="UniProtKB-UniRule"/>
</dbReference>
<dbReference type="GO" id="GO:0042158">
    <property type="term" value="P:lipoprotein biosynthetic process"/>
    <property type="evidence" value="ECO:0007669"/>
    <property type="project" value="UniProtKB-UniRule"/>
</dbReference>
<dbReference type="HAMAP" id="MF_01147">
    <property type="entry name" value="Lgt"/>
    <property type="match status" value="1"/>
</dbReference>
<dbReference type="InterPro" id="IPR001640">
    <property type="entry name" value="Lgt"/>
</dbReference>
<dbReference type="NCBIfam" id="TIGR00544">
    <property type="entry name" value="lgt"/>
    <property type="match status" value="1"/>
</dbReference>
<dbReference type="PANTHER" id="PTHR30589:SF0">
    <property type="entry name" value="PHOSPHATIDYLGLYCEROL--PROLIPOPROTEIN DIACYLGLYCERYL TRANSFERASE"/>
    <property type="match status" value="1"/>
</dbReference>
<dbReference type="PANTHER" id="PTHR30589">
    <property type="entry name" value="PROLIPOPROTEIN DIACYLGLYCERYL TRANSFERASE"/>
    <property type="match status" value="1"/>
</dbReference>
<dbReference type="Pfam" id="PF01790">
    <property type="entry name" value="LGT"/>
    <property type="match status" value="1"/>
</dbReference>
<dbReference type="PROSITE" id="PS01311">
    <property type="entry name" value="LGT"/>
    <property type="match status" value="1"/>
</dbReference>
<sequence length="279" mass="32079">MNAWNTIYDQFNPIAFSLGSIEVHWYGLAYACAIVTAFYMALRMIQKDPKRFPIERKEFESYFLWAELGIVLGARIGYILIYEPNSSYYLTHFWQIFNPFDSHGNFVGIRGMSYHGGLVGFLIASYLYSRKDLKKLLIYLDLIAISLPLGYVFGRIGNFLNQELVGRIVPKDSHLGQIIGIMVDNQLRYPSQLIEAFLEGVIVFLMVMWAKKHTKTRGLLIVVYGLGYSLMRFIAEFYREPDSQMGVYFLNLSMGQILSLFMVIVSLGILLYATKNSKK</sequence>
<organism>
    <name type="scientific">Helicobacter pylori (strain HPAG1)</name>
    <dbReference type="NCBI Taxonomy" id="357544"/>
    <lineage>
        <taxon>Bacteria</taxon>
        <taxon>Pseudomonadati</taxon>
        <taxon>Campylobacterota</taxon>
        <taxon>Epsilonproteobacteria</taxon>
        <taxon>Campylobacterales</taxon>
        <taxon>Helicobacteraceae</taxon>
        <taxon>Helicobacter</taxon>
    </lineage>
</organism>
<gene>
    <name evidence="1" type="primary">lgt</name>
    <name type="ordered locus">HPAG1_0939</name>
</gene>
<proteinExistence type="inferred from homology"/>
<keyword id="KW-0997">Cell inner membrane</keyword>
<keyword id="KW-1003">Cell membrane</keyword>
<keyword id="KW-0472">Membrane</keyword>
<keyword id="KW-0808">Transferase</keyword>
<keyword id="KW-0812">Transmembrane</keyword>
<keyword id="KW-1133">Transmembrane helix</keyword>
<evidence type="ECO:0000255" key="1">
    <source>
        <dbReference type="HAMAP-Rule" id="MF_01147"/>
    </source>
</evidence>
<protein>
    <recommendedName>
        <fullName evidence="1">Phosphatidylglycerol--prolipoprotein diacylglyceryl transferase</fullName>
        <ecNumber evidence="1">2.5.1.145</ecNumber>
    </recommendedName>
</protein>
<feature type="chain" id="PRO_1000053442" description="Phosphatidylglycerol--prolipoprotein diacylglyceryl transferase">
    <location>
        <begin position="1"/>
        <end position="279"/>
    </location>
</feature>
<feature type="transmembrane region" description="Helical" evidence="1">
    <location>
        <begin position="14"/>
        <end position="34"/>
    </location>
</feature>
<feature type="transmembrane region" description="Helical" evidence="1">
    <location>
        <begin position="62"/>
        <end position="82"/>
    </location>
</feature>
<feature type="transmembrane region" description="Helical" evidence="1">
    <location>
        <begin position="106"/>
        <end position="126"/>
    </location>
</feature>
<feature type="transmembrane region" description="Helical" evidence="1">
    <location>
        <begin position="136"/>
        <end position="156"/>
    </location>
</feature>
<feature type="transmembrane region" description="Helical" evidence="1">
    <location>
        <begin position="190"/>
        <end position="210"/>
    </location>
</feature>
<feature type="transmembrane region" description="Helical" evidence="1">
    <location>
        <begin position="218"/>
        <end position="238"/>
    </location>
</feature>
<feature type="transmembrane region" description="Helical" evidence="1">
    <location>
        <begin position="252"/>
        <end position="272"/>
    </location>
</feature>
<feature type="binding site" evidence="1">
    <location>
        <position position="155"/>
    </location>
    <ligand>
        <name>a 1,2-diacyl-sn-glycero-3-phospho-(1'-sn-glycerol)</name>
        <dbReference type="ChEBI" id="CHEBI:64716"/>
    </ligand>
</feature>
<reference key="1">
    <citation type="journal article" date="2006" name="Proc. Natl. Acad. Sci. U.S.A.">
        <title>The complete genome sequence of a chronic atrophic gastritis Helicobacter pylori strain: evolution during disease progression.</title>
        <authorList>
            <person name="Oh J.D."/>
            <person name="Kling-Baeckhed H."/>
            <person name="Giannakis M."/>
            <person name="Xu J."/>
            <person name="Fulton R.S."/>
            <person name="Fulton L.A."/>
            <person name="Cordum H.S."/>
            <person name="Wang C."/>
            <person name="Elliott G."/>
            <person name="Edwards J."/>
            <person name="Mardis E.R."/>
            <person name="Engstrand L.G."/>
            <person name="Gordon J.I."/>
        </authorList>
    </citation>
    <scope>NUCLEOTIDE SEQUENCE [LARGE SCALE GENOMIC DNA]</scope>
    <source>
        <strain>HPAG1</strain>
    </source>
</reference>
<name>LGT_HELPH</name>